<sequence>MSMTKIPLAGVMGAPIAHSKSPQLHRHWLETYGISGFYVPMEVKAADVEHVLRTLPKMGFVGLNVTLPHKEAVLKLADQITDRARLIGAANTLTFGKDGEIHADNTDGYGFLENLRSGATDWTPSQGPAVVLGAGGAARAVIVALLDAGVPEIILTNRTRARSDQLQSDFGNRVRVMDWTQISGVLHEAQLLVNTTSLGMVGKPEMEASLDGLQAHTTVTDLVYNPLKTRLLEVAEEKGCVTVDGLGMLLHQGVPGFERWFGRRPDVTDATRAAVLG</sequence>
<feature type="chain" id="PRO_0000325159" description="Shikimate dehydrogenase (NADP(+))">
    <location>
        <begin position="1"/>
        <end position="277"/>
    </location>
</feature>
<feature type="active site" description="Proton acceptor" evidence="1">
    <location>
        <position position="70"/>
    </location>
</feature>
<feature type="binding site" evidence="1">
    <location>
        <begin position="19"/>
        <end position="21"/>
    </location>
    <ligand>
        <name>shikimate</name>
        <dbReference type="ChEBI" id="CHEBI:36208"/>
    </ligand>
</feature>
<feature type="binding site" evidence="1">
    <location>
        <position position="66"/>
    </location>
    <ligand>
        <name>shikimate</name>
        <dbReference type="ChEBI" id="CHEBI:36208"/>
    </ligand>
</feature>
<feature type="binding site" evidence="1">
    <location>
        <position position="82"/>
    </location>
    <ligand>
        <name>NADP(+)</name>
        <dbReference type="ChEBI" id="CHEBI:58349"/>
    </ligand>
</feature>
<feature type="binding site" evidence="1">
    <location>
        <position position="91"/>
    </location>
    <ligand>
        <name>shikimate</name>
        <dbReference type="ChEBI" id="CHEBI:36208"/>
    </ligand>
</feature>
<feature type="binding site" evidence="1">
    <location>
        <position position="107"/>
    </location>
    <ligand>
        <name>shikimate</name>
        <dbReference type="ChEBI" id="CHEBI:36208"/>
    </ligand>
</feature>
<feature type="binding site" evidence="1">
    <location>
        <begin position="133"/>
        <end position="137"/>
    </location>
    <ligand>
        <name>NADP(+)</name>
        <dbReference type="ChEBI" id="CHEBI:58349"/>
    </ligand>
</feature>
<feature type="binding site" evidence="1">
    <location>
        <begin position="157"/>
        <end position="162"/>
    </location>
    <ligand>
        <name>NADP(+)</name>
        <dbReference type="ChEBI" id="CHEBI:58349"/>
    </ligand>
</feature>
<feature type="binding site" evidence="1">
    <location>
        <position position="222"/>
    </location>
    <ligand>
        <name>NADP(+)</name>
        <dbReference type="ChEBI" id="CHEBI:58349"/>
    </ligand>
</feature>
<feature type="binding site" evidence="1">
    <location>
        <position position="224"/>
    </location>
    <ligand>
        <name>shikimate</name>
        <dbReference type="ChEBI" id="CHEBI:36208"/>
    </ligand>
</feature>
<feature type="binding site" evidence="1">
    <location>
        <position position="245"/>
    </location>
    <ligand>
        <name>NADP(+)</name>
        <dbReference type="ChEBI" id="CHEBI:58349"/>
    </ligand>
</feature>
<name>AROE_ROSDO</name>
<accession>Q16CZ0</accession>
<dbReference type="EC" id="1.1.1.25" evidence="1"/>
<dbReference type="EMBL" id="CP000362">
    <property type="protein sequence ID" value="ABG30153.1"/>
    <property type="molecule type" value="Genomic_DNA"/>
</dbReference>
<dbReference type="RefSeq" id="WP_011566775.1">
    <property type="nucleotide sequence ID" value="NC_008209.1"/>
</dbReference>
<dbReference type="SMR" id="Q16CZ0"/>
<dbReference type="STRING" id="375451.RD1_0438"/>
<dbReference type="KEGG" id="rde:RD1_0438"/>
<dbReference type="eggNOG" id="COG0169">
    <property type="taxonomic scope" value="Bacteria"/>
</dbReference>
<dbReference type="HOGENOM" id="CLU_044063_2_0_5"/>
<dbReference type="OrthoDB" id="9792692at2"/>
<dbReference type="UniPathway" id="UPA00053">
    <property type="reaction ID" value="UER00087"/>
</dbReference>
<dbReference type="Proteomes" id="UP000007029">
    <property type="component" value="Chromosome"/>
</dbReference>
<dbReference type="GO" id="GO:0005829">
    <property type="term" value="C:cytosol"/>
    <property type="evidence" value="ECO:0007669"/>
    <property type="project" value="TreeGrafter"/>
</dbReference>
<dbReference type="GO" id="GO:0050661">
    <property type="term" value="F:NADP binding"/>
    <property type="evidence" value="ECO:0007669"/>
    <property type="project" value="InterPro"/>
</dbReference>
<dbReference type="GO" id="GO:0004764">
    <property type="term" value="F:shikimate 3-dehydrogenase (NADP+) activity"/>
    <property type="evidence" value="ECO:0007669"/>
    <property type="project" value="UniProtKB-UniRule"/>
</dbReference>
<dbReference type="GO" id="GO:0008652">
    <property type="term" value="P:amino acid biosynthetic process"/>
    <property type="evidence" value="ECO:0007669"/>
    <property type="project" value="UniProtKB-KW"/>
</dbReference>
<dbReference type="GO" id="GO:0009073">
    <property type="term" value="P:aromatic amino acid family biosynthetic process"/>
    <property type="evidence" value="ECO:0007669"/>
    <property type="project" value="UniProtKB-KW"/>
</dbReference>
<dbReference type="GO" id="GO:0009423">
    <property type="term" value="P:chorismate biosynthetic process"/>
    <property type="evidence" value="ECO:0007669"/>
    <property type="project" value="UniProtKB-UniRule"/>
</dbReference>
<dbReference type="GO" id="GO:0019632">
    <property type="term" value="P:shikimate metabolic process"/>
    <property type="evidence" value="ECO:0007669"/>
    <property type="project" value="InterPro"/>
</dbReference>
<dbReference type="CDD" id="cd01065">
    <property type="entry name" value="NAD_bind_Shikimate_DH"/>
    <property type="match status" value="1"/>
</dbReference>
<dbReference type="Gene3D" id="3.40.50.10860">
    <property type="entry name" value="Leucine Dehydrogenase, chain A, domain 1"/>
    <property type="match status" value="1"/>
</dbReference>
<dbReference type="Gene3D" id="3.40.50.720">
    <property type="entry name" value="NAD(P)-binding Rossmann-like Domain"/>
    <property type="match status" value="1"/>
</dbReference>
<dbReference type="HAMAP" id="MF_00222">
    <property type="entry name" value="Shikimate_DH_AroE"/>
    <property type="match status" value="1"/>
</dbReference>
<dbReference type="InterPro" id="IPR046346">
    <property type="entry name" value="Aminoacid_DH-like_N_sf"/>
</dbReference>
<dbReference type="InterPro" id="IPR036291">
    <property type="entry name" value="NAD(P)-bd_dom_sf"/>
</dbReference>
<dbReference type="InterPro" id="IPR041121">
    <property type="entry name" value="SDH_C"/>
</dbReference>
<dbReference type="InterPro" id="IPR011342">
    <property type="entry name" value="Shikimate_DH"/>
</dbReference>
<dbReference type="InterPro" id="IPR013708">
    <property type="entry name" value="Shikimate_DH-bd_N"/>
</dbReference>
<dbReference type="InterPro" id="IPR022893">
    <property type="entry name" value="Shikimate_DH_fam"/>
</dbReference>
<dbReference type="InterPro" id="IPR006151">
    <property type="entry name" value="Shikm_DH/Glu-tRNA_Rdtase"/>
</dbReference>
<dbReference type="NCBIfam" id="TIGR00507">
    <property type="entry name" value="aroE"/>
    <property type="match status" value="1"/>
</dbReference>
<dbReference type="NCBIfam" id="NF001312">
    <property type="entry name" value="PRK00258.1-4"/>
    <property type="match status" value="1"/>
</dbReference>
<dbReference type="PANTHER" id="PTHR21089:SF1">
    <property type="entry name" value="BIFUNCTIONAL 3-DEHYDROQUINATE DEHYDRATASE_SHIKIMATE DEHYDROGENASE, CHLOROPLASTIC"/>
    <property type="match status" value="1"/>
</dbReference>
<dbReference type="PANTHER" id="PTHR21089">
    <property type="entry name" value="SHIKIMATE DEHYDROGENASE"/>
    <property type="match status" value="1"/>
</dbReference>
<dbReference type="Pfam" id="PF18317">
    <property type="entry name" value="SDH_C"/>
    <property type="match status" value="1"/>
</dbReference>
<dbReference type="Pfam" id="PF01488">
    <property type="entry name" value="Shikimate_DH"/>
    <property type="match status" value="1"/>
</dbReference>
<dbReference type="Pfam" id="PF08501">
    <property type="entry name" value="Shikimate_dh_N"/>
    <property type="match status" value="1"/>
</dbReference>
<dbReference type="SUPFAM" id="SSF53223">
    <property type="entry name" value="Aminoacid dehydrogenase-like, N-terminal domain"/>
    <property type="match status" value="1"/>
</dbReference>
<dbReference type="SUPFAM" id="SSF51735">
    <property type="entry name" value="NAD(P)-binding Rossmann-fold domains"/>
    <property type="match status" value="1"/>
</dbReference>
<gene>
    <name evidence="1" type="primary">aroE</name>
    <name type="ordered locus">RD1_0438</name>
</gene>
<reference key="1">
    <citation type="journal article" date="2007" name="J. Bacteriol.">
        <title>The complete genome sequence of Roseobacter denitrificans reveals a mixotrophic rather than photosynthetic metabolism.</title>
        <authorList>
            <person name="Swingley W.D."/>
            <person name="Sadekar S."/>
            <person name="Mastrian S.D."/>
            <person name="Matthies H.J."/>
            <person name="Hao J."/>
            <person name="Ramos H."/>
            <person name="Acharya C.R."/>
            <person name="Conrad A.L."/>
            <person name="Taylor H.L."/>
            <person name="Dejesa L.C."/>
            <person name="Shah M.K."/>
            <person name="O'Huallachain M.E."/>
            <person name="Lince M.T."/>
            <person name="Blankenship R.E."/>
            <person name="Beatty J.T."/>
            <person name="Touchman J.W."/>
        </authorList>
    </citation>
    <scope>NUCLEOTIDE SEQUENCE [LARGE SCALE GENOMIC DNA]</scope>
    <source>
        <strain>ATCC 33942 / OCh 114</strain>
    </source>
</reference>
<evidence type="ECO:0000255" key="1">
    <source>
        <dbReference type="HAMAP-Rule" id="MF_00222"/>
    </source>
</evidence>
<proteinExistence type="inferred from homology"/>
<protein>
    <recommendedName>
        <fullName evidence="1">Shikimate dehydrogenase (NADP(+))</fullName>
        <shortName evidence="1">SDH</shortName>
        <ecNumber evidence="1">1.1.1.25</ecNumber>
    </recommendedName>
</protein>
<organism>
    <name type="scientific">Roseobacter denitrificans (strain ATCC 33942 / OCh 114)</name>
    <name type="common">Erythrobacter sp. (strain OCh 114)</name>
    <name type="synonym">Roseobacter denitrificans</name>
    <dbReference type="NCBI Taxonomy" id="375451"/>
    <lineage>
        <taxon>Bacteria</taxon>
        <taxon>Pseudomonadati</taxon>
        <taxon>Pseudomonadota</taxon>
        <taxon>Alphaproteobacteria</taxon>
        <taxon>Rhodobacterales</taxon>
        <taxon>Roseobacteraceae</taxon>
        <taxon>Roseobacter</taxon>
    </lineage>
</organism>
<keyword id="KW-0028">Amino-acid biosynthesis</keyword>
<keyword id="KW-0057">Aromatic amino acid biosynthesis</keyword>
<keyword id="KW-0521">NADP</keyword>
<keyword id="KW-0560">Oxidoreductase</keyword>
<keyword id="KW-1185">Reference proteome</keyword>
<comment type="function">
    <text evidence="1">Involved in the biosynthesis of the chorismate, which leads to the biosynthesis of aromatic amino acids. Catalyzes the reversible NADPH linked reduction of 3-dehydroshikimate (DHSA) to yield shikimate (SA).</text>
</comment>
<comment type="catalytic activity">
    <reaction evidence="1">
        <text>shikimate + NADP(+) = 3-dehydroshikimate + NADPH + H(+)</text>
        <dbReference type="Rhea" id="RHEA:17737"/>
        <dbReference type="ChEBI" id="CHEBI:15378"/>
        <dbReference type="ChEBI" id="CHEBI:16630"/>
        <dbReference type="ChEBI" id="CHEBI:36208"/>
        <dbReference type="ChEBI" id="CHEBI:57783"/>
        <dbReference type="ChEBI" id="CHEBI:58349"/>
        <dbReference type="EC" id="1.1.1.25"/>
    </reaction>
</comment>
<comment type="pathway">
    <text evidence="1">Metabolic intermediate biosynthesis; chorismate biosynthesis; chorismate from D-erythrose 4-phosphate and phosphoenolpyruvate: step 4/7.</text>
</comment>
<comment type="subunit">
    <text evidence="1">Homodimer.</text>
</comment>
<comment type="similarity">
    <text evidence="1">Belongs to the shikimate dehydrogenase family.</text>
</comment>